<accession>Q1I6E0</accession>
<comment type="similarity">
    <text evidence="1">Belongs to the SlyX family.</text>
</comment>
<protein>
    <recommendedName>
        <fullName evidence="1">Protein SlyX homolog</fullName>
    </recommendedName>
</protein>
<organism>
    <name type="scientific">Pseudomonas entomophila (strain L48)</name>
    <dbReference type="NCBI Taxonomy" id="384676"/>
    <lineage>
        <taxon>Bacteria</taxon>
        <taxon>Pseudomonadati</taxon>
        <taxon>Pseudomonadota</taxon>
        <taxon>Gammaproteobacteria</taxon>
        <taxon>Pseudomonadales</taxon>
        <taxon>Pseudomonadaceae</taxon>
        <taxon>Pseudomonas</taxon>
    </lineage>
</organism>
<reference key="1">
    <citation type="journal article" date="2006" name="Nat. Biotechnol.">
        <title>Complete genome sequence of the entomopathogenic and metabolically versatile soil bacterium Pseudomonas entomophila.</title>
        <authorList>
            <person name="Vodovar N."/>
            <person name="Vallenet D."/>
            <person name="Cruveiller S."/>
            <person name="Rouy Z."/>
            <person name="Barbe V."/>
            <person name="Acosta C."/>
            <person name="Cattolico L."/>
            <person name="Jubin C."/>
            <person name="Lajus A."/>
            <person name="Segurens B."/>
            <person name="Vacherie B."/>
            <person name="Wincker P."/>
            <person name="Weissenbach J."/>
            <person name="Lemaitre B."/>
            <person name="Medigue C."/>
            <person name="Boccard F."/>
        </authorList>
    </citation>
    <scope>NUCLEOTIDE SEQUENCE [LARGE SCALE GENOMIC DNA]</scope>
    <source>
        <strain>L48</strain>
    </source>
</reference>
<feature type="chain" id="PRO_1000045726" description="Protein SlyX homolog">
    <location>
        <begin position="1"/>
        <end position="68"/>
    </location>
</feature>
<name>SLYX_PSEE4</name>
<evidence type="ECO:0000255" key="1">
    <source>
        <dbReference type="HAMAP-Rule" id="MF_00715"/>
    </source>
</evidence>
<sequence length="68" mass="7875">MSLEMRIVELETRQAFQDDTIQALNDEVVEQSRVIERLQLQVAELIKRYEEMVGQYAGGGEEPPPPHY</sequence>
<proteinExistence type="inferred from homology"/>
<dbReference type="EMBL" id="CT573326">
    <property type="protein sequence ID" value="CAK16795.1"/>
    <property type="molecule type" value="Genomic_DNA"/>
</dbReference>
<dbReference type="RefSeq" id="WP_011535166.1">
    <property type="nucleotide sequence ID" value="NC_008027.1"/>
</dbReference>
<dbReference type="SMR" id="Q1I6E0"/>
<dbReference type="STRING" id="384676.PSEEN4101"/>
<dbReference type="GeneID" id="32807116"/>
<dbReference type="KEGG" id="pen:PSEEN4101"/>
<dbReference type="eggNOG" id="COG2900">
    <property type="taxonomic scope" value="Bacteria"/>
</dbReference>
<dbReference type="HOGENOM" id="CLU_180796_4_1_6"/>
<dbReference type="OrthoDB" id="8606883at2"/>
<dbReference type="Proteomes" id="UP000000658">
    <property type="component" value="Chromosome"/>
</dbReference>
<dbReference type="Gene3D" id="1.20.5.300">
    <property type="match status" value="1"/>
</dbReference>
<dbReference type="HAMAP" id="MF_00715">
    <property type="entry name" value="SlyX"/>
    <property type="match status" value="1"/>
</dbReference>
<dbReference type="InterPro" id="IPR007236">
    <property type="entry name" value="SlyX"/>
</dbReference>
<dbReference type="NCBIfam" id="NF001421">
    <property type="entry name" value="PRK00295.1"/>
    <property type="match status" value="1"/>
</dbReference>
<dbReference type="PANTHER" id="PTHR36508">
    <property type="entry name" value="PROTEIN SLYX"/>
    <property type="match status" value="1"/>
</dbReference>
<dbReference type="PANTHER" id="PTHR36508:SF1">
    <property type="entry name" value="PROTEIN SLYX"/>
    <property type="match status" value="1"/>
</dbReference>
<dbReference type="Pfam" id="PF04102">
    <property type="entry name" value="SlyX"/>
    <property type="match status" value="1"/>
</dbReference>
<gene>
    <name evidence="1" type="primary">slyX</name>
    <name type="ordered locus">PSEEN4101</name>
</gene>